<proteinExistence type="inferred from homology"/>
<protein>
    <recommendedName>
        <fullName evidence="1">Ribosome maturation factor RimP</fullName>
    </recommendedName>
</protein>
<accession>Q1MQZ0</accession>
<comment type="function">
    <text evidence="1">Required for maturation of 30S ribosomal subunits.</text>
</comment>
<comment type="subcellular location">
    <subcellularLocation>
        <location evidence="1">Cytoplasm</location>
    </subcellularLocation>
</comment>
<comment type="similarity">
    <text evidence="1">Belongs to the RimP family.</text>
</comment>
<keyword id="KW-0963">Cytoplasm</keyword>
<keyword id="KW-1185">Reference proteome</keyword>
<keyword id="KW-0690">Ribosome biogenesis</keyword>
<gene>
    <name evidence="1" type="primary">rimP</name>
    <name type="ordered locus">LI0533</name>
</gene>
<dbReference type="EMBL" id="AM180252">
    <property type="protein sequence ID" value="CAJ54587.1"/>
    <property type="molecule type" value="Genomic_DNA"/>
</dbReference>
<dbReference type="RefSeq" id="WP_011526616.1">
    <property type="nucleotide sequence ID" value="NC_008011.1"/>
</dbReference>
<dbReference type="SMR" id="Q1MQZ0"/>
<dbReference type="STRING" id="363253.LI0533"/>
<dbReference type="KEGG" id="lip:LI0533"/>
<dbReference type="eggNOG" id="COG0779">
    <property type="taxonomic scope" value="Bacteria"/>
</dbReference>
<dbReference type="HOGENOM" id="CLU_070525_1_1_7"/>
<dbReference type="OrthoDB" id="9805006at2"/>
<dbReference type="Proteomes" id="UP000002430">
    <property type="component" value="Chromosome"/>
</dbReference>
<dbReference type="GO" id="GO:0005829">
    <property type="term" value="C:cytosol"/>
    <property type="evidence" value="ECO:0007669"/>
    <property type="project" value="TreeGrafter"/>
</dbReference>
<dbReference type="GO" id="GO:0000028">
    <property type="term" value="P:ribosomal small subunit assembly"/>
    <property type="evidence" value="ECO:0007669"/>
    <property type="project" value="TreeGrafter"/>
</dbReference>
<dbReference type="GO" id="GO:0006412">
    <property type="term" value="P:translation"/>
    <property type="evidence" value="ECO:0007669"/>
    <property type="project" value="TreeGrafter"/>
</dbReference>
<dbReference type="CDD" id="cd01734">
    <property type="entry name" value="YlxS_C"/>
    <property type="match status" value="1"/>
</dbReference>
<dbReference type="Gene3D" id="2.30.30.180">
    <property type="entry name" value="Ribosome maturation factor RimP, C-terminal domain"/>
    <property type="match status" value="1"/>
</dbReference>
<dbReference type="Gene3D" id="3.30.300.70">
    <property type="entry name" value="RimP-like superfamily, N-terminal"/>
    <property type="match status" value="1"/>
</dbReference>
<dbReference type="HAMAP" id="MF_01077">
    <property type="entry name" value="RimP"/>
    <property type="match status" value="1"/>
</dbReference>
<dbReference type="InterPro" id="IPR003728">
    <property type="entry name" value="Ribosome_maturation_RimP"/>
</dbReference>
<dbReference type="InterPro" id="IPR028998">
    <property type="entry name" value="RimP_C"/>
</dbReference>
<dbReference type="InterPro" id="IPR036847">
    <property type="entry name" value="RimP_C_sf"/>
</dbReference>
<dbReference type="InterPro" id="IPR028989">
    <property type="entry name" value="RimP_N"/>
</dbReference>
<dbReference type="InterPro" id="IPR035956">
    <property type="entry name" value="RimP_N_sf"/>
</dbReference>
<dbReference type="PANTHER" id="PTHR33867">
    <property type="entry name" value="RIBOSOME MATURATION FACTOR RIMP"/>
    <property type="match status" value="1"/>
</dbReference>
<dbReference type="PANTHER" id="PTHR33867:SF1">
    <property type="entry name" value="RIBOSOME MATURATION FACTOR RIMP"/>
    <property type="match status" value="1"/>
</dbReference>
<dbReference type="Pfam" id="PF02576">
    <property type="entry name" value="RimP_N"/>
    <property type="match status" value="1"/>
</dbReference>
<dbReference type="SUPFAM" id="SSF74942">
    <property type="entry name" value="YhbC-like, C-terminal domain"/>
    <property type="match status" value="1"/>
</dbReference>
<dbReference type="SUPFAM" id="SSF75420">
    <property type="entry name" value="YhbC-like, N-terminal domain"/>
    <property type="match status" value="1"/>
</dbReference>
<name>RIMP_LAWIP</name>
<sequence>MNSAALIETITQLISPLITAQGLKLWGIELINIPQPIIKIFVDTIETNRLHENNIINSKSEQITIEQCASLSRLIGLTLEVEELFPNKWTLEVSSPGLERSFFTIQQLSNYINHDIDVTLKEQHPLWPNRKKFYGTLISITDNTFMLNLSLAHRKSDEPENVSINWQQVRKATLVHHFFQPNKKLGSTKGLNGGTT</sequence>
<evidence type="ECO:0000255" key="1">
    <source>
        <dbReference type="HAMAP-Rule" id="MF_01077"/>
    </source>
</evidence>
<reference key="1">
    <citation type="submission" date="2005-11" db="EMBL/GenBank/DDBJ databases">
        <title>The complete genome sequence of Lawsonia intracellularis: the causative agent of proliferative enteropathy.</title>
        <authorList>
            <person name="Kaur K."/>
            <person name="Zhang Q."/>
            <person name="Beckler D."/>
            <person name="Munir S."/>
            <person name="Li L."/>
            <person name="Kinsley K."/>
            <person name="Herron L."/>
            <person name="Peterson A."/>
            <person name="May B."/>
            <person name="Singh S."/>
            <person name="Gebhart C."/>
            <person name="Kapur V."/>
        </authorList>
    </citation>
    <scope>NUCLEOTIDE SEQUENCE [LARGE SCALE GENOMIC DNA]</scope>
    <source>
        <strain>PHE/MN1-00</strain>
    </source>
</reference>
<feature type="chain" id="PRO_1000064728" description="Ribosome maturation factor RimP">
    <location>
        <begin position="1"/>
        <end position="196"/>
    </location>
</feature>
<organism>
    <name type="scientific">Lawsonia intracellularis (strain PHE/MN1-00)</name>
    <dbReference type="NCBI Taxonomy" id="363253"/>
    <lineage>
        <taxon>Bacteria</taxon>
        <taxon>Pseudomonadati</taxon>
        <taxon>Thermodesulfobacteriota</taxon>
        <taxon>Desulfovibrionia</taxon>
        <taxon>Desulfovibrionales</taxon>
        <taxon>Desulfovibrionaceae</taxon>
        <taxon>Lawsonia</taxon>
    </lineage>
</organism>